<comment type="function">
    <text evidence="1">Catalyzes the complicated ring closure reaction between the two acyclic compounds 1-deoxy-D-xylulose-5-phosphate (DXP) and 3-amino-2-oxopropyl phosphate (1-amino-acetone-3-phosphate or AAP) to form pyridoxine 5'-phosphate (PNP) and inorganic phosphate.</text>
</comment>
<comment type="catalytic activity">
    <reaction evidence="1">
        <text>3-amino-2-oxopropyl phosphate + 1-deoxy-D-xylulose 5-phosphate = pyridoxine 5'-phosphate + phosphate + 2 H2O + H(+)</text>
        <dbReference type="Rhea" id="RHEA:15265"/>
        <dbReference type="ChEBI" id="CHEBI:15377"/>
        <dbReference type="ChEBI" id="CHEBI:15378"/>
        <dbReference type="ChEBI" id="CHEBI:43474"/>
        <dbReference type="ChEBI" id="CHEBI:57279"/>
        <dbReference type="ChEBI" id="CHEBI:57792"/>
        <dbReference type="ChEBI" id="CHEBI:58589"/>
        <dbReference type="EC" id="2.6.99.2"/>
    </reaction>
</comment>
<comment type="pathway">
    <text evidence="1">Cofactor biosynthesis; pyridoxine 5'-phosphate biosynthesis; pyridoxine 5'-phosphate from D-erythrose 4-phosphate: step 5/5.</text>
</comment>
<comment type="subunit">
    <text evidence="1">Homooctamer; tetramer of dimers.</text>
</comment>
<comment type="subcellular location">
    <subcellularLocation>
        <location evidence="1">Cytoplasm</location>
    </subcellularLocation>
</comment>
<comment type="similarity">
    <text evidence="1">Belongs to the PNP synthase family.</text>
</comment>
<organism>
    <name type="scientific">Prochlorococcus marinus subsp. pastoris (strain CCMP1986 / NIES-2087 / MED4)</name>
    <dbReference type="NCBI Taxonomy" id="59919"/>
    <lineage>
        <taxon>Bacteria</taxon>
        <taxon>Bacillati</taxon>
        <taxon>Cyanobacteriota</taxon>
        <taxon>Cyanophyceae</taxon>
        <taxon>Synechococcales</taxon>
        <taxon>Prochlorococcaceae</taxon>
        <taxon>Prochlorococcus</taxon>
    </lineage>
</organism>
<keyword id="KW-0963">Cytoplasm</keyword>
<keyword id="KW-0664">Pyridoxine biosynthesis</keyword>
<keyword id="KW-0808">Transferase</keyword>
<evidence type="ECO:0000255" key="1">
    <source>
        <dbReference type="HAMAP-Rule" id="MF_00279"/>
    </source>
</evidence>
<dbReference type="EC" id="2.6.99.2" evidence="1"/>
<dbReference type="EMBL" id="BX548174">
    <property type="protein sequence ID" value="CAE19566.1"/>
    <property type="molecule type" value="Genomic_DNA"/>
</dbReference>
<dbReference type="RefSeq" id="WP_011132740.1">
    <property type="nucleotide sequence ID" value="NC_005072.1"/>
</dbReference>
<dbReference type="SMR" id="Q7V0Y7"/>
<dbReference type="STRING" id="59919.PMM1107"/>
<dbReference type="KEGG" id="pmm:PMM1107"/>
<dbReference type="eggNOG" id="COG0854">
    <property type="taxonomic scope" value="Bacteria"/>
</dbReference>
<dbReference type="HOGENOM" id="CLU_074563_0_0_3"/>
<dbReference type="OrthoDB" id="9806590at2"/>
<dbReference type="UniPathway" id="UPA00244">
    <property type="reaction ID" value="UER00313"/>
</dbReference>
<dbReference type="Proteomes" id="UP000001026">
    <property type="component" value="Chromosome"/>
</dbReference>
<dbReference type="GO" id="GO:0005829">
    <property type="term" value="C:cytosol"/>
    <property type="evidence" value="ECO:0007669"/>
    <property type="project" value="TreeGrafter"/>
</dbReference>
<dbReference type="GO" id="GO:0033856">
    <property type="term" value="F:pyridoxine 5'-phosphate synthase activity"/>
    <property type="evidence" value="ECO:0007669"/>
    <property type="project" value="UniProtKB-EC"/>
</dbReference>
<dbReference type="GO" id="GO:0008615">
    <property type="term" value="P:pyridoxine biosynthetic process"/>
    <property type="evidence" value="ECO:0007669"/>
    <property type="project" value="UniProtKB-UniRule"/>
</dbReference>
<dbReference type="CDD" id="cd00003">
    <property type="entry name" value="PNPsynthase"/>
    <property type="match status" value="1"/>
</dbReference>
<dbReference type="Gene3D" id="3.20.20.70">
    <property type="entry name" value="Aldolase class I"/>
    <property type="match status" value="1"/>
</dbReference>
<dbReference type="HAMAP" id="MF_00279">
    <property type="entry name" value="PdxJ"/>
    <property type="match status" value="1"/>
</dbReference>
<dbReference type="InterPro" id="IPR013785">
    <property type="entry name" value="Aldolase_TIM"/>
</dbReference>
<dbReference type="InterPro" id="IPR004569">
    <property type="entry name" value="PyrdxlP_synth_PdxJ"/>
</dbReference>
<dbReference type="InterPro" id="IPR036130">
    <property type="entry name" value="Pyridoxine-5'_phos_synth"/>
</dbReference>
<dbReference type="NCBIfam" id="TIGR00559">
    <property type="entry name" value="pdxJ"/>
    <property type="match status" value="1"/>
</dbReference>
<dbReference type="NCBIfam" id="NF003625">
    <property type="entry name" value="PRK05265.1-3"/>
    <property type="match status" value="1"/>
</dbReference>
<dbReference type="NCBIfam" id="NF003627">
    <property type="entry name" value="PRK05265.1-5"/>
    <property type="match status" value="1"/>
</dbReference>
<dbReference type="PANTHER" id="PTHR30456">
    <property type="entry name" value="PYRIDOXINE 5'-PHOSPHATE SYNTHASE"/>
    <property type="match status" value="1"/>
</dbReference>
<dbReference type="PANTHER" id="PTHR30456:SF0">
    <property type="entry name" value="PYRIDOXINE 5'-PHOSPHATE SYNTHASE"/>
    <property type="match status" value="1"/>
</dbReference>
<dbReference type="Pfam" id="PF03740">
    <property type="entry name" value="PdxJ"/>
    <property type="match status" value="1"/>
</dbReference>
<dbReference type="SUPFAM" id="SSF63892">
    <property type="entry name" value="Pyridoxine 5'-phosphate synthase"/>
    <property type="match status" value="1"/>
</dbReference>
<proteinExistence type="inferred from homology"/>
<name>PDXJ_PROMP</name>
<accession>Q7V0Y7</accession>
<reference key="1">
    <citation type="journal article" date="2003" name="Nature">
        <title>Genome divergence in two Prochlorococcus ecotypes reflects oceanic niche differentiation.</title>
        <authorList>
            <person name="Rocap G."/>
            <person name="Larimer F.W."/>
            <person name="Lamerdin J.E."/>
            <person name="Malfatti S."/>
            <person name="Chain P."/>
            <person name="Ahlgren N.A."/>
            <person name="Arellano A."/>
            <person name="Coleman M."/>
            <person name="Hauser L."/>
            <person name="Hess W.R."/>
            <person name="Johnson Z.I."/>
            <person name="Land M.L."/>
            <person name="Lindell D."/>
            <person name="Post A.F."/>
            <person name="Regala W."/>
            <person name="Shah M."/>
            <person name="Shaw S.L."/>
            <person name="Steglich C."/>
            <person name="Sullivan M.B."/>
            <person name="Ting C.S."/>
            <person name="Tolonen A."/>
            <person name="Webb E.A."/>
            <person name="Zinser E.R."/>
            <person name="Chisholm S.W."/>
        </authorList>
    </citation>
    <scope>NUCLEOTIDE SEQUENCE [LARGE SCALE GENOMIC DNA]</scope>
    <source>
        <strain>CCMP1986 / NIES-2087 / MED4</strain>
    </source>
</reference>
<sequence>MAKLGVNIDHIANVRQARQTVEPDPVQFAFLAELGGADSITIHLREDRRHIQDRDIYLLKDTIKTKLNLEMAATEEMLRISKKLLPDYVTLVPEKRKEITTEGGLDVKNNEKYLKNYVNSLKSSNIEVSAFIDPANDQINSSGEIGFDFIELHTGKYAGLKGQDQYVELQKIIESSYYAVDIGLIVNAGHGLNYQNVKKIASINNMNELNIGHSIVSRALAVGLERAVREMKTLISIN</sequence>
<feature type="chain" id="PRO_0000231832" description="Pyridoxine 5'-phosphate synthase">
    <location>
        <begin position="1"/>
        <end position="238"/>
    </location>
</feature>
<feature type="active site" description="Proton acceptor" evidence="1">
    <location>
        <position position="43"/>
    </location>
</feature>
<feature type="active site" description="Proton acceptor" evidence="1">
    <location>
        <position position="70"/>
    </location>
</feature>
<feature type="active site" description="Proton donor" evidence="1">
    <location>
        <position position="190"/>
    </location>
</feature>
<feature type="binding site" evidence="1">
    <location>
        <position position="7"/>
    </location>
    <ligand>
        <name>3-amino-2-oxopropyl phosphate</name>
        <dbReference type="ChEBI" id="CHEBI:57279"/>
    </ligand>
</feature>
<feature type="binding site" evidence="1">
    <location>
        <begin position="9"/>
        <end position="10"/>
    </location>
    <ligand>
        <name>1-deoxy-D-xylulose 5-phosphate</name>
        <dbReference type="ChEBI" id="CHEBI:57792"/>
    </ligand>
</feature>
<feature type="binding site" evidence="1">
    <location>
        <position position="18"/>
    </location>
    <ligand>
        <name>3-amino-2-oxopropyl phosphate</name>
        <dbReference type="ChEBI" id="CHEBI:57279"/>
    </ligand>
</feature>
<feature type="binding site" evidence="1">
    <location>
        <position position="45"/>
    </location>
    <ligand>
        <name>1-deoxy-D-xylulose 5-phosphate</name>
        <dbReference type="ChEBI" id="CHEBI:57792"/>
    </ligand>
</feature>
<feature type="binding site" evidence="1">
    <location>
        <position position="50"/>
    </location>
    <ligand>
        <name>1-deoxy-D-xylulose 5-phosphate</name>
        <dbReference type="ChEBI" id="CHEBI:57792"/>
    </ligand>
</feature>
<feature type="binding site" evidence="1">
    <location>
        <position position="100"/>
    </location>
    <ligand>
        <name>1-deoxy-D-xylulose 5-phosphate</name>
        <dbReference type="ChEBI" id="CHEBI:57792"/>
    </ligand>
</feature>
<feature type="binding site" evidence="1">
    <location>
        <position position="191"/>
    </location>
    <ligand>
        <name>3-amino-2-oxopropyl phosphate</name>
        <dbReference type="ChEBI" id="CHEBI:57279"/>
    </ligand>
</feature>
<feature type="binding site" evidence="1">
    <location>
        <begin position="212"/>
        <end position="213"/>
    </location>
    <ligand>
        <name>3-amino-2-oxopropyl phosphate</name>
        <dbReference type="ChEBI" id="CHEBI:57279"/>
    </ligand>
</feature>
<feature type="site" description="Transition state stabilizer" evidence="1">
    <location>
        <position position="151"/>
    </location>
</feature>
<protein>
    <recommendedName>
        <fullName evidence="1">Pyridoxine 5'-phosphate synthase</fullName>
        <shortName evidence="1">PNP synthase</shortName>
        <ecNumber evidence="1">2.6.99.2</ecNumber>
    </recommendedName>
</protein>
<gene>
    <name evidence="1" type="primary">pdxJ</name>
    <name type="ordered locus">PMM1107</name>
</gene>